<dbReference type="EMBL" id="AE016796">
    <property type="protein sequence ID" value="AAO07270.1"/>
    <property type="molecule type" value="Genomic_DNA"/>
</dbReference>
<dbReference type="RefSeq" id="WP_011081273.1">
    <property type="nucleotide sequence ID" value="NC_004460.2"/>
</dbReference>
<dbReference type="SMR" id="Q8D757"/>
<dbReference type="KEGG" id="vvu:VV2_0310"/>
<dbReference type="HOGENOM" id="CLU_185263_1_0_6"/>
<dbReference type="Proteomes" id="UP000002275">
    <property type="component" value="Chromosome 2"/>
</dbReference>
<dbReference type="HAMAP" id="MF_00507">
    <property type="entry name" value="UPF0181"/>
    <property type="match status" value="1"/>
</dbReference>
<dbReference type="InterPro" id="IPR005371">
    <property type="entry name" value="UPF0181"/>
</dbReference>
<dbReference type="NCBIfam" id="NF003476">
    <property type="entry name" value="PRK05114.1"/>
    <property type="match status" value="1"/>
</dbReference>
<dbReference type="Pfam" id="PF03701">
    <property type="entry name" value="UPF0181"/>
    <property type="match status" value="1"/>
</dbReference>
<proteinExistence type="inferred from homology"/>
<name>Y4310_VIBVU</name>
<protein>
    <recommendedName>
        <fullName evidence="1">UPF0181 protein VV2_0310</fullName>
    </recommendedName>
</protein>
<sequence length="51" mass="5763">MFDDLPPLSHQEQQRAVEEIQKLMAEGMSTAQAIKIIAEKIRAEHKAQSSK</sequence>
<feature type="chain" id="PRO_0000216205" description="UPF0181 protein VV2_0310">
    <location>
        <begin position="1"/>
        <end position="51"/>
    </location>
</feature>
<organism>
    <name type="scientific">Vibrio vulnificus (strain CMCP6)</name>
    <dbReference type="NCBI Taxonomy" id="216895"/>
    <lineage>
        <taxon>Bacteria</taxon>
        <taxon>Pseudomonadati</taxon>
        <taxon>Pseudomonadota</taxon>
        <taxon>Gammaproteobacteria</taxon>
        <taxon>Vibrionales</taxon>
        <taxon>Vibrionaceae</taxon>
        <taxon>Vibrio</taxon>
    </lineage>
</organism>
<accession>Q8D757</accession>
<comment type="similarity">
    <text evidence="1">Belongs to the UPF0181 family.</text>
</comment>
<gene>
    <name type="ordered locus">VV2_0310</name>
</gene>
<reference key="1">
    <citation type="submission" date="2002-12" db="EMBL/GenBank/DDBJ databases">
        <title>Complete genome sequence of Vibrio vulnificus CMCP6.</title>
        <authorList>
            <person name="Rhee J.H."/>
            <person name="Kim S.Y."/>
            <person name="Chung S.S."/>
            <person name="Kim J.J."/>
            <person name="Moon Y.H."/>
            <person name="Jeong H."/>
            <person name="Choy H.E."/>
        </authorList>
    </citation>
    <scope>NUCLEOTIDE SEQUENCE [LARGE SCALE GENOMIC DNA]</scope>
    <source>
        <strain>CMCP6</strain>
    </source>
</reference>
<evidence type="ECO:0000255" key="1">
    <source>
        <dbReference type="HAMAP-Rule" id="MF_00507"/>
    </source>
</evidence>